<accession>O95834</accession>
<accession>B7Z3I2</accession>
<accession>B7Z3Q9</accession>
<accession>K7ERL7</accession>
<accession>Q59EN8</accession>
<accession>Q8N5A2</accession>
<accession>Q9UG50</accession>
<sequence>MSSFGAGKTKEVIFSVEDGSVKMFLRGRPVPMMIPDELAPTYSLDTRSELPSCRLKLEWVYGYRGRDCRANLYLLPTGEIVYFVASVAVLYSVEEQRQRHYLGHNDDIKCLAIHPDMVTIATGQVAGTTKEGKPLPPHVRIWDSVSLSTLHVLGLGVFDRAVCCVGFSKSNGGNLLCAVDESNDHMLSVWDWAKETKVVDVKCSNEAVLVATFHPTDPTVLITCGKSHIYFWTLEGGSLSKRQGLFEKHEKPKYVLCVTFLEGGDVVTGDSGGNLYVWGKGGNRITQAVLGAHDGGVFGLCALRDGTLVSGGGRDRRVVLWGSDYSKLQEVEVPEDFGPVRTVAEGHGDTLYVGTTRNSILQGSVHTGFSLLVQGHVEELWGLATHPSRAQFVTCGQDKLVHLWSSDSHQPLWSRIIEDPARSAGFHPSGSVLAVGTVTGRWLLLDTETHDLVAIHTDGNEQISVVSFSPDGAYLAVGSHDNLVYVYTVDQGGRKVSRLGKCSGHSSFITHLDWAQDSSCFVTNSGDYEILYWDPATCKQITSADAVRNMEWATATCVLGFGVFGIWSEGADGTDINAVARSHDGKLLASADDFGKVHLFSYPCCQPRALSHKYGGHSSHVTNVAFLWDDSMALTTGGKDTSVLQWRVV</sequence>
<gene>
    <name type="primary">EML2</name>
    <name type="synonym">EMAP2</name>
    <name type="synonym">EMAPL2</name>
</gene>
<dbReference type="EMBL" id="AF103939">
    <property type="protein sequence ID" value="AAD19904.1"/>
    <property type="molecule type" value="mRNA"/>
</dbReference>
<dbReference type="EMBL" id="AL096717">
    <property type="protein sequence ID" value="CAB46373.2"/>
    <property type="molecule type" value="mRNA"/>
</dbReference>
<dbReference type="EMBL" id="AK295905">
    <property type="protein sequence ID" value="BAH12218.1"/>
    <property type="molecule type" value="mRNA"/>
</dbReference>
<dbReference type="EMBL" id="AK296258">
    <property type="protein sequence ID" value="BAH12295.1"/>
    <property type="molecule type" value="mRNA"/>
</dbReference>
<dbReference type="EMBL" id="AC006132">
    <property type="status" value="NOT_ANNOTATED_CDS"/>
    <property type="molecule type" value="Genomic_DNA"/>
</dbReference>
<dbReference type="EMBL" id="AC011480">
    <property type="status" value="NOT_ANNOTATED_CDS"/>
    <property type="molecule type" value="Genomic_DNA"/>
</dbReference>
<dbReference type="EMBL" id="AC098776">
    <property type="status" value="NOT_ANNOTATED_CDS"/>
    <property type="molecule type" value="Genomic_DNA"/>
</dbReference>
<dbReference type="EMBL" id="BC032630">
    <property type="protein sequence ID" value="AAH32630.1"/>
    <property type="molecule type" value="mRNA"/>
</dbReference>
<dbReference type="EMBL" id="AB209773">
    <property type="protein sequence ID" value="BAD93010.1"/>
    <property type="molecule type" value="mRNA"/>
</dbReference>
<dbReference type="CCDS" id="CCDS12670.1">
    <molecule id="O95834-1"/>
</dbReference>
<dbReference type="CCDS" id="CCDS54280.1">
    <molecule id="O95834-2"/>
</dbReference>
<dbReference type="CCDS" id="CCDS59399.1">
    <molecule id="O95834-3"/>
</dbReference>
<dbReference type="RefSeq" id="NP_001180197.1">
    <molecule id="O95834-3"/>
    <property type="nucleotide sequence ID" value="NM_001193268.3"/>
</dbReference>
<dbReference type="RefSeq" id="NP_001180198.1">
    <molecule id="O95834-2"/>
    <property type="nucleotide sequence ID" value="NM_001193269.2"/>
</dbReference>
<dbReference type="RefSeq" id="NP_036287.1">
    <molecule id="O95834-1"/>
    <property type="nucleotide sequence ID" value="NM_012155.4"/>
</dbReference>
<dbReference type="PDB" id="4CGB">
    <property type="method" value="X-ray"/>
    <property type="resolution" value="2.15 A"/>
    <property type="chains" value="A/B/C/D/E/F=-"/>
</dbReference>
<dbReference type="PDBsum" id="4CGB"/>
<dbReference type="SMR" id="O95834"/>
<dbReference type="BioGRID" id="117290">
    <property type="interactions" value="39"/>
</dbReference>
<dbReference type="FunCoup" id="O95834">
    <property type="interactions" value="104"/>
</dbReference>
<dbReference type="IntAct" id="O95834">
    <property type="interactions" value="13"/>
</dbReference>
<dbReference type="STRING" id="9606.ENSP00000468312"/>
<dbReference type="GlyGen" id="O95834">
    <property type="glycosylation" value="1 site, 1 O-linked glycan (1 site)"/>
</dbReference>
<dbReference type="iPTMnet" id="O95834"/>
<dbReference type="MetOSite" id="O95834"/>
<dbReference type="PhosphoSitePlus" id="O95834"/>
<dbReference type="BioMuta" id="EML2"/>
<dbReference type="jPOST" id="O95834"/>
<dbReference type="MassIVE" id="O95834"/>
<dbReference type="PaxDb" id="9606-ENSP00000468312"/>
<dbReference type="PeptideAtlas" id="O95834"/>
<dbReference type="ProteomicsDB" id="51079">
    <molecule id="O95834-1"/>
</dbReference>
<dbReference type="ProteomicsDB" id="51080">
    <molecule id="O95834-2"/>
</dbReference>
<dbReference type="Antibodypedia" id="2407">
    <property type="antibodies" value="153 antibodies from 25 providers"/>
</dbReference>
<dbReference type="DNASU" id="24139"/>
<dbReference type="Ensembl" id="ENST00000245925.8">
    <molecule id="O95834-1"/>
    <property type="protein sequence ID" value="ENSP00000245925.3"/>
    <property type="gene ID" value="ENSG00000125746.18"/>
</dbReference>
<dbReference type="Ensembl" id="ENST00000536630.5">
    <molecule id="O95834-2"/>
    <property type="protein sequence ID" value="ENSP00000442365.1"/>
    <property type="gene ID" value="ENSG00000125746.18"/>
</dbReference>
<dbReference type="Ensembl" id="ENST00000587152.6">
    <molecule id="O95834-3"/>
    <property type="protein sequence ID" value="ENSP00000468312.1"/>
    <property type="gene ID" value="ENSG00000125746.18"/>
</dbReference>
<dbReference type="GeneID" id="24139"/>
<dbReference type="KEGG" id="hsa:24139"/>
<dbReference type="MANE-Select" id="ENST00000245925.8">
    <property type="protein sequence ID" value="ENSP00000245925.3"/>
    <property type="RefSeq nucleotide sequence ID" value="NM_012155.4"/>
    <property type="RefSeq protein sequence ID" value="NP_036287.1"/>
</dbReference>
<dbReference type="UCSC" id="uc002pcn.4">
    <molecule id="O95834-1"/>
    <property type="organism name" value="human"/>
</dbReference>
<dbReference type="AGR" id="HGNC:18035"/>
<dbReference type="CTD" id="24139"/>
<dbReference type="DisGeNET" id="24139"/>
<dbReference type="GeneCards" id="EML2"/>
<dbReference type="HGNC" id="HGNC:18035">
    <property type="gene designation" value="EML2"/>
</dbReference>
<dbReference type="HPA" id="ENSG00000125746">
    <property type="expression patterns" value="Low tissue specificity"/>
</dbReference>
<dbReference type="MIM" id="617494">
    <property type="type" value="gene"/>
</dbReference>
<dbReference type="neXtProt" id="NX_O95834"/>
<dbReference type="OpenTargets" id="ENSG00000125746"/>
<dbReference type="PharmGKB" id="PA27768"/>
<dbReference type="VEuPathDB" id="HostDB:ENSG00000125746"/>
<dbReference type="eggNOG" id="KOG2106">
    <property type="taxonomic scope" value="Eukaryota"/>
</dbReference>
<dbReference type="GeneTree" id="ENSGT00940000153887"/>
<dbReference type="HOGENOM" id="CLU_011754_2_0_1"/>
<dbReference type="InParanoid" id="O95834"/>
<dbReference type="OMA" id="RNIEWAT"/>
<dbReference type="OrthoDB" id="47802at2759"/>
<dbReference type="PAN-GO" id="O95834">
    <property type="GO annotations" value="3 GO annotations based on evolutionary models"/>
</dbReference>
<dbReference type="PhylomeDB" id="O95834"/>
<dbReference type="TreeFam" id="TF317832"/>
<dbReference type="PathwayCommons" id="O95834"/>
<dbReference type="SignaLink" id="O95834"/>
<dbReference type="BioGRID-ORCS" id="24139">
    <property type="hits" value="15 hits in 1151 CRISPR screens"/>
</dbReference>
<dbReference type="ChiTaRS" id="EML2">
    <property type="organism name" value="human"/>
</dbReference>
<dbReference type="GenomeRNAi" id="24139"/>
<dbReference type="Pharos" id="O95834">
    <property type="development level" value="Tbio"/>
</dbReference>
<dbReference type="PRO" id="PR:O95834"/>
<dbReference type="Proteomes" id="UP000005640">
    <property type="component" value="Chromosome 19"/>
</dbReference>
<dbReference type="RNAct" id="O95834">
    <property type="molecule type" value="protein"/>
</dbReference>
<dbReference type="Bgee" id="ENSG00000125746">
    <property type="expression patterns" value="Expressed in C1 segment of cervical spinal cord and 196 other cell types or tissues"/>
</dbReference>
<dbReference type="ExpressionAtlas" id="O95834">
    <property type="expression patterns" value="baseline and differential"/>
</dbReference>
<dbReference type="GO" id="GO:0005737">
    <property type="term" value="C:cytoplasm"/>
    <property type="evidence" value="ECO:0007669"/>
    <property type="project" value="UniProtKB-KW"/>
</dbReference>
<dbReference type="GO" id="GO:0005874">
    <property type="term" value="C:microtubule"/>
    <property type="evidence" value="ECO:0007669"/>
    <property type="project" value="UniProtKB-KW"/>
</dbReference>
<dbReference type="GO" id="GO:0005875">
    <property type="term" value="C:microtubule associated complex"/>
    <property type="evidence" value="ECO:0000304"/>
    <property type="project" value="ProtInc"/>
</dbReference>
<dbReference type="GO" id="GO:0005819">
    <property type="term" value="C:spindle"/>
    <property type="evidence" value="ECO:0007669"/>
    <property type="project" value="UniProtKB-SubCell"/>
</dbReference>
<dbReference type="GO" id="GO:0008017">
    <property type="term" value="F:microtubule binding"/>
    <property type="evidence" value="ECO:0000314"/>
    <property type="project" value="UniProtKB"/>
</dbReference>
<dbReference type="GO" id="GO:0015631">
    <property type="term" value="F:tubulin binding"/>
    <property type="evidence" value="ECO:0000314"/>
    <property type="project" value="UniProtKB"/>
</dbReference>
<dbReference type="GO" id="GO:0000226">
    <property type="term" value="P:microtubule cytoskeleton organization"/>
    <property type="evidence" value="ECO:0000318"/>
    <property type="project" value="GO_Central"/>
</dbReference>
<dbReference type="GO" id="GO:0031115">
    <property type="term" value="P:negative regulation of microtubule polymerization"/>
    <property type="evidence" value="ECO:0000314"/>
    <property type="project" value="UniProtKB"/>
</dbReference>
<dbReference type="GO" id="GO:0010968">
    <property type="term" value="P:regulation of microtubule nucleation"/>
    <property type="evidence" value="ECO:0000314"/>
    <property type="project" value="UniProtKB"/>
</dbReference>
<dbReference type="GO" id="GO:0007605">
    <property type="term" value="P:sensory perception of sound"/>
    <property type="evidence" value="ECO:0000304"/>
    <property type="project" value="ProtInc"/>
</dbReference>
<dbReference type="GO" id="GO:0007601">
    <property type="term" value="P:visual perception"/>
    <property type="evidence" value="ECO:0000304"/>
    <property type="project" value="ProtInc"/>
</dbReference>
<dbReference type="FunFam" id="2.130.10.10:FF:000731">
    <property type="entry name" value="Echinoderm microtubule-associated 2 isoform x3"/>
    <property type="match status" value="1"/>
</dbReference>
<dbReference type="FunFam" id="2.130.10.10:FF:000011">
    <property type="entry name" value="Echinoderm microtubule-associated protein-like 2 isoform 1"/>
    <property type="match status" value="1"/>
</dbReference>
<dbReference type="FunFam" id="2.130.10.10:FF:000005">
    <property type="entry name" value="Putative echinoderm microtubule-associated protein-like 1"/>
    <property type="match status" value="1"/>
</dbReference>
<dbReference type="Gene3D" id="2.130.10.10">
    <property type="entry name" value="YVTN repeat-like/Quinoprotein amine dehydrogenase"/>
    <property type="match status" value="2"/>
</dbReference>
<dbReference type="InterPro" id="IPR055442">
    <property type="entry name" value="Beta-prop_EML-like_2nd"/>
</dbReference>
<dbReference type="InterPro" id="IPR055439">
    <property type="entry name" value="Beta-prop_EML_1st"/>
</dbReference>
<dbReference type="InterPro" id="IPR005108">
    <property type="entry name" value="HELP"/>
</dbReference>
<dbReference type="InterPro" id="IPR011047">
    <property type="entry name" value="Quinoprotein_ADH-like_sf"/>
</dbReference>
<dbReference type="InterPro" id="IPR015943">
    <property type="entry name" value="WD40/YVTN_repeat-like_dom_sf"/>
</dbReference>
<dbReference type="InterPro" id="IPR036322">
    <property type="entry name" value="WD40_repeat_dom_sf"/>
</dbReference>
<dbReference type="InterPro" id="IPR001680">
    <property type="entry name" value="WD40_rpt"/>
</dbReference>
<dbReference type="InterPro" id="IPR050630">
    <property type="entry name" value="WD_repeat_EMAP"/>
</dbReference>
<dbReference type="PANTHER" id="PTHR13720:SF50">
    <property type="entry name" value="ECHINODERM MICROTUBULE-ASSOCIATED PROTEIN-LIKE 2"/>
    <property type="match status" value="1"/>
</dbReference>
<dbReference type="PANTHER" id="PTHR13720">
    <property type="entry name" value="WD-40 REPEAT PROTEIN"/>
    <property type="match status" value="1"/>
</dbReference>
<dbReference type="Pfam" id="PF23409">
    <property type="entry name" value="Beta-prop_EML"/>
    <property type="match status" value="1"/>
</dbReference>
<dbReference type="Pfam" id="PF23414">
    <property type="entry name" value="Beta-prop_EML_2"/>
    <property type="match status" value="1"/>
</dbReference>
<dbReference type="Pfam" id="PF03451">
    <property type="entry name" value="HELP"/>
    <property type="match status" value="1"/>
</dbReference>
<dbReference type="SMART" id="SM00320">
    <property type="entry name" value="WD40"/>
    <property type="match status" value="11"/>
</dbReference>
<dbReference type="SUPFAM" id="SSF50998">
    <property type="entry name" value="Quinoprotein alcohol dehydrogenase-like"/>
    <property type="match status" value="1"/>
</dbReference>
<dbReference type="SUPFAM" id="SSF50978">
    <property type="entry name" value="WD40 repeat-like"/>
    <property type="match status" value="1"/>
</dbReference>
<dbReference type="PROSITE" id="PS50082">
    <property type="entry name" value="WD_REPEATS_2"/>
    <property type="match status" value="5"/>
</dbReference>
<dbReference type="PROSITE" id="PS50294">
    <property type="entry name" value="WD_REPEATS_REGION"/>
    <property type="match status" value="1"/>
</dbReference>
<name>EMAL2_HUMAN</name>
<comment type="function">
    <text evidence="5">Tubulin binding protein that inhibits microtubule nucleation and growth, resulting in shorter microtubules.</text>
</comment>
<comment type="subunit">
    <molecule>Isoform 2</molecule>
    <text evidence="8">Homotrimer; self-association is mediated by the N-terminal coiled coil.</text>
</comment>
<comment type="subunit">
    <text evidence="2 5 7 8">Interacts with GRID2 and may also interact with GRID1 (By similarity). Interacts with EML3 (PubMed:25740311). Binds unpolymerized tubulins via its WD repeat region (PubMed:11694528, PubMed:24706829).</text>
</comment>
<comment type="interaction">
    <interactant intactId="EBI-1054588">
        <id>O95834</id>
    </interactant>
    <interactant intactId="EBI-10192266">
        <id>Q8NHP7</id>
        <label>EXD1</label>
    </interactant>
    <organismsDiffer>false</organismsDiffer>
    <experiments>3</experiments>
</comment>
<comment type="interaction">
    <interactant intactId="EBI-1054588">
        <id>O95834</id>
    </interactant>
    <interactant intactId="EBI-307352">
        <id>Q04864</id>
        <label>REL</label>
    </interactant>
    <organismsDiffer>false</organismsDiffer>
    <experiments>3</experiments>
</comment>
<comment type="subcellular location">
    <subcellularLocation>
        <location evidence="5">Cytoplasm</location>
        <location evidence="5">Cytoskeleton</location>
    </subcellularLocation>
    <subcellularLocation>
        <location evidence="5">Cytoplasm</location>
        <location evidence="5">Cytoskeleton</location>
        <location evidence="5">Spindle</location>
    </subcellularLocation>
    <text evidence="5">Colocalizes with the microtubule cytoskeleton. Colocalizes with the mitotic spindle.</text>
</comment>
<comment type="alternative products">
    <event type="alternative splicing"/>
    <isoform>
        <id>O95834-1</id>
        <name>1</name>
        <sequence type="displayed"/>
    </isoform>
    <isoform>
        <id>O95834-2</id>
        <name>2</name>
        <sequence type="described" ref="VSP_042541"/>
    </isoform>
    <isoform>
        <id>O95834-3</id>
        <name>3</name>
        <sequence type="described" ref="VSP_047538"/>
    </isoform>
</comment>
<comment type="tissue specificity">
    <text evidence="4">Ubiquitous.</text>
</comment>
<comment type="domain">
    <text evidence="1">Contains a tandem atypical propeller in EMLs (TAPE) domain. The N-terminal beta-propeller is formed by canonical WD repeats; in contrast, the second beta-propeller contains one blade that is formed by discontinuous parts of the polypeptide chain (By similarity).</text>
</comment>
<comment type="similarity">
    <text evidence="11">Belongs to the WD repeat EMAP family.</text>
</comment>
<protein>
    <recommendedName>
        <fullName>Echinoderm microtubule-associated protein-like 2</fullName>
        <shortName>EMAP-2</shortName>
        <shortName>HuEMAP-2</shortName>
    </recommendedName>
</protein>
<reference key="1">
    <citation type="journal article" date="1999" name="Gene">
        <title>Sequence and expression patterns of a human EMAP-related protein-2 (HuEMAP-2).</title>
        <authorList>
            <person name="Lepley D.M."/>
            <person name="Palange J.M."/>
            <person name="Suprenant K.A."/>
        </authorList>
    </citation>
    <scope>NUCLEOTIDE SEQUENCE [MRNA] (ISOFORM 1)</scope>
    <scope>TISSUE SPECIFICITY</scope>
    <source>
        <tissue>Placenta</tissue>
    </source>
</reference>
<reference key="2">
    <citation type="journal article" date="2004" name="Nat. Genet.">
        <title>Complete sequencing and characterization of 21,243 full-length human cDNAs.</title>
        <authorList>
            <person name="Ota T."/>
            <person name="Suzuki Y."/>
            <person name="Nishikawa T."/>
            <person name="Otsuki T."/>
            <person name="Sugiyama T."/>
            <person name="Irie R."/>
            <person name="Wakamatsu A."/>
            <person name="Hayashi K."/>
            <person name="Sato H."/>
            <person name="Nagai K."/>
            <person name="Kimura K."/>
            <person name="Makita H."/>
            <person name="Sekine M."/>
            <person name="Obayashi M."/>
            <person name="Nishi T."/>
            <person name="Shibahara T."/>
            <person name="Tanaka T."/>
            <person name="Ishii S."/>
            <person name="Yamamoto J."/>
            <person name="Saito K."/>
            <person name="Kawai Y."/>
            <person name="Isono Y."/>
            <person name="Nakamura Y."/>
            <person name="Nagahari K."/>
            <person name="Murakami K."/>
            <person name="Yasuda T."/>
            <person name="Iwayanagi T."/>
            <person name="Wagatsuma M."/>
            <person name="Shiratori A."/>
            <person name="Sudo H."/>
            <person name="Hosoiri T."/>
            <person name="Kaku Y."/>
            <person name="Kodaira H."/>
            <person name="Kondo H."/>
            <person name="Sugawara M."/>
            <person name="Takahashi M."/>
            <person name="Kanda K."/>
            <person name="Yokoi T."/>
            <person name="Furuya T."/>
            <person name="Kikkawa E."/>
            <person name="Omura Y."/>
            <person name="Abe K."/>
            <person name="Kamihara K."/>
            <person name="Katsuta N."/>
            <person name="Sato K."/>
            <person name="Tanikawa M."/>
            <person name="Yamazaki M."/>
            <person name="Ninomiya K."/>
            <person name="Ishibashi T."/>
            <person name="Yamashita H."/>
            <person name="Murakawa K."/>
            <person name="Fujimori K."/>
            <person name="Tanai H."/>
            <person name="Kimata M."/>
            <person name="Watanabe M."/>
            <person name="Hiraoka S."/>
            <person name="Chiba Y."/>
            <person name="Ishida S."/>
            <person name="Ono Y."/>
            <person name="Takiguchi S."/>
            <person name="Watanabe S."/>
            <person name="Yosida M."/>
            <person name="Hotuta T."/>
            <person name="Kusano J."/>
            <person name="Kanehori K."/>
            <person name="Takahashi-Fujii A."/>
            <person name="Hara H."/>
            <person name="Tanase T.-O."/>
            <person name="Nomura Y."/>
            <person name="Togiya S."/>
            <person name="Komai F."/>
            <person name="Hara R."/>
            <person name="Takeuchi K."/>
            <person name="Arita M."/>
            <person name="Imose N."/>
            <person name="Musashino K."/>
            <person name="Yuuki H."/>
            <person name="Oshima A."/>
            <person name="Sasaki N."/>
            <person name="Aotsuka S."/>
            <person name="Yoshikawa Y."/>
            <person name="Matsunawa H."/>
            <person name="Ichihara T."/>
            <person name="Shiohata N."/>
            <person name="Sano S."/>
            <person name="Moriya S."/>
            <person name="Momiyama H."/>
            <person name="Satoh N."/>
            <person name="Takami S."/>
            <person name="Terashima Y."/>
            <person name="Suzuki O."/>
            <person name="Nakagawa S."/>
            <person name="Senoh A."/>
            <person name="Mizoguchi H."/>
            <person name="Goto Y."/>
            <person name="Shimizu F."/>
            <person name="Wakebe H."/>
            <person name="Hishigaki H."/>
            <person name="Watanabe T."/>
            <person name="Sugiyama A."/>
            <person name="Takemoto M."/>
            <person name="Kawakami B."/>
            <person name="Yamazaki M."/>
            <person name="Watanabe K."/>
            <person name="Kumagai A."/>
            <person name="Itakura S."/>
            <person name="Fukuzumi Y."/>
            <person name="Fujimori Y."/>
            <person name="Komiyama M."/>
            <person name="Tashiro H."/>
            <person name="Tanigami A."/>
            <person name="Fujiwara T."/>
            <person name="Ono T."/>
            <person name="Yamada K."/>
            <person name="Fujii Y."/>
            <person name="Ozaki K."/>
            <person name="Hirao M."/>
            <person name="Ohmori Y."/>
            <person name="Kawabata A."/>
            <person name="Hikiji T."/>
            <person name="Kobatake N."/>
            <person name="Inagaki H."/>
            <person name="Ikema Y."/>
            <person name="Okamoto S."/>
            <person name="Okitani R."/>
            <person name="Kawakami T."/>
            <person name="Noguchi S."/>
            <person name="Itoh T."/>
            <person name="Shigeta K."/>
            <person name="Senba T."/>
            <person name="Matsumura K."/>
            <person name="Nakajima Y."/>
            <person name="Mizuno T."/>
            <person name="Morinaga M."/>
            <person name="Sasaki M."/>
            <person name="Togashi T."/>
            <person name="Oyama M."/>
            <person name="Hata H."/>
            <person name="Watanabe M."/>
            <person name="Komatsu T."/>
            <person name="Mizushima-Sugano J."/>
            <person name="Satoh T."/>
            <person name="Shirai Y."/>
            <person name="Takahashi Y."/>
            <person name="Nakagawa K."/>
            <person name="Okumura K."/>
            <person name="Nagase T."/>
            <person name="Nomura N."/>
            <person name="Kikuchi H."/>
            <person name="Masuho Y."/>
            <person name="Yamashita R."/>
            <person name="Nakai K."/>
            <person name="Yada T."/>
            <person name="Nakamura Y."/>
            <person name="Ohara O."/>
            <person name="Isogai T."/>
            <person name="Sugano S."/>
        </authorList>
    </citation>
    <scope>NUCLEOTIDE SEQUENCE [LARGE SCALE MRNA] (ISOFORM 2)</scope>
    <scope>NUCLEOTIDE SEQUENCE [LARGE SCALE MRNA] OF 33-850 (ISOFORM 3)</scope>
    <source>
        <tissue>Substantia nigra</tissue>
        <tissue>Thalamus</tissue>
    </source>
</reference>
<reference key="3">
    <citation type="journal article" date="2007" name="BMC Genomics">
        <title>The full-ORF clone resource of the German cDNA consortium.</title>
        <authorList>
            <person name="Bechtel S."/>
            <person name="Rosenfelder H."/>
            <person name="Duda A."/>
            <person name="Schmidt C.P."/>
            <person name="Ernst U."/>
            <person name="Wellenreuther R."/>
            <person name="Mehrle A."/>
            <person name="Schuster C."/>
            <person name="Bahr A."/>
            <person name="Bloecker H."/>
            <person name="Heubner D."/>
            <person name="Hoerlein A."/>
            <person name="Michel G."/>
            <person name="Wedler H."/>
            <person name="Koehrer K."/>
            <person name="Ottenwaelder B."/>
            <person name="Poustka A."/>
            <person name="Wiemann S."/>
            <person name="Schupp I."/>
        </authorList>
    </citation>
    <scope>NUCLEOTIDE SEQUENCE [LARGE SCALE MRNA] (ISOFORM 1)</scope>
    <source>
        <tissue>Brain</tissue>
    </source>
</reference>
<reference key="4">
    <citation type="journal article" date="2004" name="Nature">
        <title>The DNA sequence and biology of human chromosome 19.</title>
        <authorList>
            <person name="Grimwood J."/>
            <person name="Gordon L.A."/>
            <person name="Olsen A.S."/>
            <person name="Terry A."/>
            <person name="Schmutz J."/>
            <person name="Lamerdin J.E."/>
            <person name="Hellsten U."/>
            <person name="Goodstein D."/>
            <person name="Couronne O."/>
            <person name="Tran-Gyamfi M."/>
            <person name="Aerts A."/>
            <person name="Altherr M."/>
            <person name="Ashworth L."/>
            <person name="Bajorek E."/>
            <person name="Black S."/>
            <person name="Branscomb E."/>
            <person name="Caenepeel S."/>
            <person name="Carrano A.V."/>
            <person name="Caoile C."/>
            <person name="Chan Y.M."/>
            <person name="Christensen M."/>
            <person name="Cleland C.A."/>
            <person name="Copeland A."/>
            <person name="Dalin E."/>
            <person name="Dehal P."/>
            <person name="Denys M."/>
            <person name="Detter J.C."/>
            <person name="Escobar J."/>
            <person name="Flowers D."/>
            <person name="Fotopulos D."/>
            <person name="Garcia C."/>
            <person name="Georgescu A.M."/>
            <person name="Glavina T."/>
            <person name="Gomez M."/>
            <person name="Gonzales E."/>
            <person name="Groza M."/>
            <person name="Hammon N."/>
            <person name="Hawkins T."/>
            <person name="Haydu L."/>
            <person name="Ho I."/>
            <person name="Huang W."/>
            <person name="Israni S."/>
            <person name="Jett J."/>
            <person name="Kadner K."/>
            <person name="Kimball H."/>
            <person name="Kobayashi A."/>
            <person name="Larionov V."/>
            <person name="Leem S.-H."/>
            <person name="Lopez F."/>
            <person name="Lou Y."/>
            <person name="Lowry S."/>
            <person name="Malfatti S."/>
            <person name="Martinez D."/>
            <person name="McCready P.M."/>
            <person name="Medina C."/>
            <person name="Morgan J."/>
            <person name="Nelson K."/>
            <person name="Nolan M."/>
            <person name="Ovcharenko I."/>
            <person name="Pitluck S."/>
            <person name="Pollard M."/>
            <person name="Popkie A.P."/>
            <person name="Predki P."/>
            <person name="Quan G."/>
            <person name="Ramirez L."/>
            <person name="Rash S."/>
            <person name="Retterer J."/>
            <person name="Rodriguez A."/>
            <person name="Rogers S."/>
            <person name="Salamov A."/>
            <person name="Salazar A."/>
            <person name="She X."/>
            <person name="Smith D."/>
            <person name="Slezak T."/>
            <person name="Solovyev V."/>
            <person name="Thayer N."/>
            <person name="Tice H."/>
            <person name="Tsai M."/>
            <person name="Ustaszewska A."/>
            <person name="Vo N."/>
            <person name="Wagner M."/>
            <person name="Wheeler J."/>
            <person name="Wu K."/>
            <person name="Xie G."/>
            <person name="Yang J."/>
            <person name="Dubchak I."/>
            <person name="Furey T.S."/>
            <person name="DeJong P."/>
            <person name="Dickson M."/>
            <person name="Gordon D."/>
            <person name="Eichler E.E."/>
            <person name="Pennacchio L.A."/>
            <person name="Richardson P."/>
            <person name="Stubbs L."/>
            <person name="Rokhsar D.S."/>
            <person name="Myers R.M."/>
            <person name="Rubin E.M."/>
            <person name="Lucas S.M."/>
        </authorList>
    </citation>
    <scope>NUCLEOTIDE SEQUENCE [LARGE SCALE GENOMIC DNA]</scope>
</reference>
<reference key="5">
    <citation type="journal article" date="2004" name="Genome Res.">
        <title>The status, quality, and expansion of the NIH full-length cDNA project: the Mammalian Gene Collection (MGC).</title>
        <authorList>
            <consortium name="The MGC Project Team"/>
        </authorList>
    </citation>
    <scope>NUCLEOTIDE SEQUENCE [LARGE SCALE MRNA] OF 1-427 (ISOFORM 1)</scope>
    <source>
        <tissue>Liver</tissue>
    </source>
</reference>
<reference key="6">
    <citation type="submission" date="2005-03" db="EMBL/GenBank/DDBJ databases">
        <authorList>
            <person name="Totoki Y."/>
            <person name="Toyoda A."/>
            <person name="Takeda T."/>
            <person name="Sakaki Y."/>
            <person name="Tanaka A."/>
            <person name="Yokoyama S."/>
            <person name="Ohara O."/>
            <person name="Nagase T."/>
            <person name="Kikuno R.F."/>
        </authorList>
    </citation>
    <scope>NUCLEOTIDE SEQUENCE [LARGE SCALE MRNA] OF 76-649 (ISOFORM 1)</scope>
    <scope>VARIANT ASP-235</scope>
    <source>
        <tissue>Brain</tissue>
    </source>
</reference>
<reference key="7">
    <citation type="journal article" date="2002" name="J. Biol. Chem.">
        <title>The human EMAP-like protein-70 (ELP70) is a microtubule destabilizer that localizes to the mitotic apparatus.</title>
        <authorList>
            <person name="Eichenmuller B."/>
            <person name="Everley P."/>
            <person name="Palange J."/>
            <person name="Lepley D."/>
            <person name="Suprenant K.A."/>
        </authorList>
    </citation>
    <scope>FUNCTION</scope>
    <scope>INTERACTION WITH TUBULIN</scope>
    <scope>SUBCELLULAR LOCATION</scope>
</reference>
<reference key="8">
    <citation type="journal article" date="2014" name="Proc. Natl. Acad. Sci. U.S.A.">
        <title>Crystal structure of EML1 reveals the basis for Hsp90 dependence of oncogenic EML4-ALK by disruption of an atypical beta-propeller domain.</title>
        <authorList>
            <person name="Richards M.W."/>
            <person name="Law E.W."/>
            <person name="Rennalls L.P."/>
            <person name="Busacca S."/>
            <person name="O'Regan L."/>
            <person name="Fry A.M."/>
            <person name="Fennell D.A."/>
            <person name="Bayliss R."/>
        </authorList>
    </citation>
    <scope>INTERACTION WITH TUBULIN</scope>
</reference>
<reference key="9">
    <citation type="journal article" date="2015" name="Biochem. J.">
        <title>Microtubule association of EML proteins and the EML4-ALK variant 3 oncoprotein require an N-terminal trimerization domain.</title>
        <authorList>
            <person name="Richards M.W."/>
            <person name="O'Regan L."/>
            <person name="Roth D."/>
            <person name="Montgomery J.M."/>
            <person name="Straube A."/>
            <person name="Fry A.M."/>
            <person name="Bayliss R."/>
        </authorList>
    </citation>
    <scope>X-RAY CRYSTALLOGRAPHY (2.15 ANGSTROMS) OF 11-60 OF ISOFORM 2</scope>
    <scope>SUBUNIT (ISOFORM 2)</scope>
    <scope>INTERACTION WITH EML3</scope>
    <scope>COILED COIL (ISOFORM 2)</scope>
</reference>
<reference key="10">
    <citation type="journal article" date="2006" name="Science">
        <title>The consensus coding sequences of human breast and colorectal cancers.</title>
        <authorList>
            <person name="Sjoeblom T."/>
            <person name="Jones S."/>
            <person name="Wood L.D."/>
            <person name="Parsons D.W."/>
            <person name="Lin J."/>
            <person name="Barber T.D."/>
            <person name="Mandelker D."/>
            <person name="Leary R.J."/>
            <person name="Ptak J."/>
            <person name="Silliman N."/>
            <person name="Szabo S."/>
            <person name="Buckhaults P."/>
            <person name="Farrell C."/>
            <person name="Meeh P."/>
            <person name="Markowitz S.D."/>
            <person name="Willis J."/>
            <person name="Dawson D."/>
            <person name="Willson J.K.V."/>
            <person name="Gazdar A.F."/>
            <person name="Hartigan J."/>
            <person name="Wu L."/>
            <person name="Liu C."/>
            <person name="Parmigiani G."/>
            <person name="Park B.H."/>
            <person name="Bachman K.E."/>
            <person name="Papadopoulos N."/>
            <person name="Vogelstein B."/>
            <person name="Kinzler K.W."/>
            <person name="Velculescu V.E."/>
        </authorList>
    </citation>
    <scope>VARIANT [LARGE SCALE ANALYSIS] LEU-484</scope>
</reference>
<evidence type="ECO:0000250" key="1"/>
<evidence type="ECO:0000250" key="2">
    <source>
        <dbReference type="UniProtKB" id="Q6P6T4"/>
    </source>
</evidence>
<evidence type="ECO:0000255" key="3"/>
<evidence type="ECO:0000269" key="4">
    <source>
    </source>
</evidence>
<evidence type="ECO:0000269" key="5">
    <source>
    </source>
</evidence>
<evidence type="ECO:0000269" key="6">
    <source>
    </source>
</evidence>
<evidence type="ECO:0000269" key="7">
    <source>
    </source>
</evidence>
<evidence type="ECO:0000269" key="8">
    <source>
    </source>
</evidence>
<evidence type="ECO:0000269" key="9">
    <source ref="6"/>
</evidence>
<evidence type="ECO:0000303" key="10">
    <source>
    </source>
</evidence>
<evidence type="ECO:0000305" key="11"/>
<evidence type="ECO:0007829" key="12">
    <source>
        <dbReference type="PDB" id="4CGB"/>
    </source>
</evidence>
<proteinExistence type="evidence at protein level"/>
<organism>
    <name type="scientific">Homo sapiens</name>
    <name type="common">Human</name>
    <dbReference type="NCBI Taxonomy" id="9606"/>
    <lineage>
        <taxon>Eukaryota</taxon>
        <taxon>Metazoa</taxon>
        <taxon>Chordata</taxon>
        <taxon>Craniata</taxon>
        <taxon>Vertebrata</taxon>
        <taxon>Euteleostomi</taxon>
        <taxon>Mammalia</taxon>
        <taxon>Eutheria</taxon>
        <taxon>Euarchontoglires</taxon>
        <taxon>Primates</taxon>
        <taxon>Haplorrhini</taxon>
        <taxon>Catarrhini</taxon>
        <taxon>Hominidae</taxon>
        <taxon>Homo</taxon>
    </lineage>
</organism>
<feature type="chain" id="PRO_0000050962" description="Echinoderm microtubule-associated protein-like 2">
    <location>
        <begin position="1"/>
        <end position="649"/>
    </location>
</feature>
<feature type="repeat" description="WD 1">
    <location>
        <begin position="56"/>
        <end position="93"/>
    </location>
</feature>
<feature type="repeat" description="WD 2">
    <location>
        <begin position="97"/>
        <end position="144"/>
    </location>
</feature>
<feature type="repeat" description="WD 3">
    <location>
        <begin position="151"/>
        <end position="192"/>
    </location>
</feature>
<feature type="repeat" description="WD 4">
    <location>
        <begin position="195"/>
        <end position="234"/>
    </location>
</feature>
<feature type="repeat" description="WD 5">
    <location>
        <begin position="241"/>
        <end position="280"/>
    </location>
</feature>
<feature type="repeat" description="WD 6">
    <location>
        <begin position="285"/>
        <end position="323"/>
    </location>
</feature>
<feature type="repeat" description="WD 7">
    <location>
        <begin position="369"/>
        <end position="406"/>
    </location>
</feature>
<feature type="repeat" description="WD 8">
    <location>
        <begin position="410"/>
        <end position="447"/>
    </location>
</feature>
<feature type="repeat" description="WD 9">
    <location>
        <begin position="452"/>
        <end position="489"/>
    </location>
</feature>
<feature type="repeat" description="WD 10">
    <location>
        <begin position="495"/>
        <end position="535"/>
    </location>
</feature>
<feature type="repeat" description="WD 11">
    <location>
        <begin position="564"/>
        <end position="602"/>
    </location>
</feature>
<feature type="repeat" description="WD 12">
    <location>
        <begin position="609"/>
        <end position="648"/>
    </location>
</feature>
<feature type="region of interest" description="Tandem atypical propeller in EMLs" evidence="1">
    <location>
        <begin position="10"/>
        <end position="649"/>
    </location>
</feature>
<feature type="splice variant" id="VSP_042541" description="In isoform 2." evidence="10">
    <original>MSSFGA</original>
    <variation>MSLDDNLSGTSGMEVDDRVSALEQRLQLQEDELAVLKAALADALRRLRACEEQGAALRARGTPKGRAPPRLGTTASVCQLLKGLPTRTPLNGSGPPRRVGGYATSPSSPKKEATSGRSSVRRYLSPERLASVRREDPRSRTTSSSSNCSAKKE</variation>
    <location>
        <begin position="1"/>
        <end position="6"/>
    </location>
</feature>
<feature type="splice variant" id="VSP_047538" description="In isoform 3." evidence="10">
    <original>MSSFGA</original>
    <variation>MLERRALLWQREAGPGWGDRARAGTGGAGGGCGGAMAERGPAFCGLYDTSSLLRYCNDDNLSGTSGMEVDDRVSALEQRLQLQEDELAVLKAALADALRRLRACEEQGAALRARGTPKGRAPPRLGTTASVCQLLKGLPTRTPLNGSGPPRRVGGYATSPSSPKKEATSGRSSVRRYLSPERLASVRREDPRSRTTSSSSNCSAKKE</variation>
    <location>
        <begin position="1"/>
        <end position="6"/>
    </location>
</feature>
<feature type="sequence variant" id="VAR_031723" description="In dbSNP:rs12151009.">
    <original>M</original>
    <variation>V</variation>
    <location>
        <position position="33"/>
    </location>
</feature>
<feature type="sequence variant" id="VAR_031724" description="In dbSNP:rs7252175.">
    <original>L</original>
    <variation>F</variation>
    <location>
        <position position="187"/>
    </location>
</feature>
<feature type="sequence variant" id="VAR_024697" description="In dbSNP:rs1545040." evidence="9">
    <original>E</original>
    <variation>D</variation>
    <location>
        <position position="235"/>
    </location>
</feature>
<feature type="sequence variant" id="VAR_022026" description="In dbSNP:rs3816045.">
    <original>R</original>
    <variation>H</variation>
    <location>
        <position position="357"/>
    </location>
</feature>
<feature type="sequence variant" id="VAR_035879" description="In a colorectal cancer sample; somatic mutation; dbSNP:rs1270442107." evidence="6">
    <original>V</original>
    <variation>L</variation>
    <location>
        <position position="484"/>
    </location>
</feature>
<feature type="sequence conflict" description="In Ref. 3; CAB46373." evidence="11" ref="3">
    <original>D</original>
    <variation>G</variation>
    <location>
        <position position="294"/>
    </location>
</feature>
<feature type="sequence conflict" description="In Ref. 3; AAH32630." evidence="11" ref="3">
    <original>DPARSAGFH</original>
    <variation>MAAAGHGDP</variation>
    <location>
        <begin position="419"/>
        <end position="427"/>
    </location>
</feature>
<feature type="sequence conflict" description="In Ref. 3; CAB46373." evidence="11" ref="3">
    <original>S</original>
    <variation>F</variation>
    <location>
        <position position="582"/>
    </location>
</feature>
<feature type="helix" evidence="12">
    <location>
        <begin position="15"/>
        <end position="55"/>
    </location>
</feature>
<feature type="coiled-coil region" evidence="8">
    <location sequence="O95834-2">
        <begin position="13"/>
        <end position="58"/>
    </location>
</feature>
<feature type="coiled-coil region" evidence="3">
    <location sequence="O95834-3">
        <begin position="73"/>
        <end position="114"/>
    </location>
</feature>
<keyword id="KW-0002">3D-structure</keyword>
<keyword id="KW-0025">Alternative splicing</keyword>
<keyword id="KW-0175">Coiled coil</keyword>
<keyword id="KW-0963">Cytoplasm</keyword>
<keyword id="KW-0206">Cytoskeleton</keyword>
<keyword id="KW-0493">Microtubule</keyword>
<keyword id="KW-1267">Proteomics identification</keyword>
<keyword id="KW-1185">Reference proteome</keyword>
<keyword id="KW-0677">Repeat</keyword>
<keyword id="KW-0853">WD repeat</keyword>